<proteinExistence type="inferred from homology"/>
<protein>
    <recommendedName>
        <fullName evidence="1">Bifunctional purine biosynthesis protein PurH</fullName>
    </recommendedName>
    <domain>
        <recommendedName>
            <fullName evidence="1">Phosphoribosylaminoimidazolecarboxamide formyltransferase</fullName>
            <ecNumber evidence="1">2.1.2.3</ecNumber>
        </recommendedName>
        <alternativeName>
            <fullName evidence="1">AICAR transformylase</fullName>
        </alternativeName>
    </domain>
    <domain>
        <recommendedName>
            <fullName evidence="1">IMP cyclohydrolase</fullName>
            <ecNumber evidence="1">3.5.4.10</ecNumber>
        </recommendedName>
        <alternativeName>
            <fullName evidence="1">ATIC</fullName>
        </alternativeName>
        <alternativeName>
            <fullName evidence="1">IMP synthase</fullName>
        </alternativeName>
        <alternativeName>
            <fullName evidence="1">Inosinicase</fullName>
        </alternativeName>
    </domain>
</protein>
<comment type="catalytic activity">
    <reaction evidence="1">
        <text>(6R)-10-formyltetrahydrofolate + 5-amino-1-(5-phospho-beta-D-ribosyl)imidazole-4-carboxamide = 5-formamido-1-(5-phospho-D-ribosyl)imidazole-4-carboxamide + (6S)-5,6,7,8-tetrahydrofolate</text>
        <dbReference type="Rhea" id="RHEA:22192"/>
        <dbReference type="ChEBI" id="CHEBI:57453"/>
        <dbReference type="ChEBI" id="CHEBI:58467"/>
        <dbReference type="ChEBI" id="CHEBI:58475"/>
        <dbReference type="ChEBI" id="CHEBI:195366"/>
        <dbReference type="EC" id="2.1.2.3"/>
    </reaction>
</comment>
<comment type="catalytic activity">
    <reaction evidence="1">
        <text>IMP + H2O = 5-formamido-1-(5-phospho-D-ribosyl)imidazole-4-carboxamide</text>
        <dbReference type="Rhea" id="RHEA:18445"/>
        <dbReference type="ChEBI" id="CHEBI:15377"/>
        <dbReference type="ChEBI" id="CHEBI:58053"/>
        <dbReference type="ChEBI" id="CHEBI:58467"/>
        <dbReference type="EC" id="3.5.4.10"/>
    </reaction>
</comment>
<comment type="pathway">
    <text evidence="1">Purine metabolism; IMP biosynthesis via de novo pathway; 5-formamido-1-(5-phospho-D-ribosyl)imidazole-4-carboxamide from 5-amino-1-(5-phospho-D-ribosyl)imidazole-4-carboxamide (10-formyl THF route): step 1/1.</text>
</comment>
<comment type="pathway">
    <text evidence="1">Purine metabolism; IMP biosynthesis via de novo pathway; IMP from 5-formamido-1-(5-phospho-D-ribosyl)imidazole-4-carboxamide: step 1/1.</text>
</comment>
<comment type="domain">
    <text evidence="1">The IMP cyclohydrolase activity resides in the N-terminal region.</text>
</comment>
<comment type="similarity">
    <text evidence="1">Belongs to the PurH family.</text>
</comment>
<evidence type="ECO:0000255" key="1">
    <source>
        <dbReference type="HAMAP-Rule" id="MF_00139"/>
    </source>
</evidence>
<evidence type="ECO:0000255" key="2">
    <source>
        <dbReference type="PROSITE-ProRule" id="PRU01202"/>
    </source>
</evidence>
<dbReference type="EC" id="2.1.2.3" evidence="1"/>
<dbReference type="EC" id="3.5.4.10" evidence="1"/>
<dbReference type="EMBL" id="FM200053">
    <property type="protein sequence ID" value="CAR62011.1"/>
    <property type="molecule type" value="Genomic_DNA"/>
</dbReference>
<dbReference type="RefSeq" id="WP_001187508.1">
    <property type="nucleotide sequence ID" value="NC_011147.1"/>
</dbReference>
<dbReference type="SMR" id="B5BJS5"/>
<dbReference type="KEGG" id="sek:SSPA3728"/>
<dbReference type="HOGENOM" id="CLU_016316_5_2_6"/>
<dbReference type="UniPathway" id="UPA00074">
    <property type="reaction ID" value="UER00133"/>
</dbReference>
<dbReference type="UniPathway" id="UPA00074">
    <property type="reaction ID" value="UER00135"/>
</dbReference>
<dbReference type="Proteomes" id="UP000001869">
    <property type="component" value="Chromosome"/>
</dbReference>
<dbReference type="GO" id="GO:0005829">
    <property type="term" value="C:cytosol"/>
    <property type="evidence" value="ECO:0007669"/>
    <property type="project" value="TreeGrafter"/>
</dbReference>
<dbReference type="GO" id="GO:0003937">
    <property type="term" value="F:IMP cyclohydrolase activity"/>
    <property type="evidence" value="ECO:0007669"/>
    <property type="project" value="UniProtKB-UniRule"/>
</dbReference>
<dbReference type="GO" id="GO:0004643">
    <property type="term" value="F:phosphoribosylaminoimidazolecarboxamide formyltransferase activity"/>
    <property type="evidence" value="ECO:0007669"/>
    <property type="project" value="UniProtKB-UniRule"/>
</dbReference>
<dbReference type="GO" id="GO:0006189">
    <property type="term" value="P:'de novo' IMP biosynthetic process"/>
    <property type="evidence" value="ECO:0007669"/>
    <property type="project" value="UniProtKB-UniRule"/>
</dbReference>
<dbReference type="CDD" id="cd01421">
    <property type="entry name" value="IMPCH"/>
    <property type="match status" value="1"/>
</dbReference>
<dbReference type="FunFam" id="3.40.140.20:FF:000001">
    <property type="entry name" value="Bifunctional purine biosynthesis protein PurH"/>
    <property type="match status" value="1"/>
</dbReference>
<dbReference type="FunFam" id="3.40.140.20:FF:000002">
    <property type="entry name" value="Bifunctional purine biosynthesis protein PurH"/>
    <property type="match status" value="1"/>
</dbReference>
<dbReference type="FunFam" id="3.40.50.1380:FF:000001">
    <property type="entry name" value="Bifunctional purine biosynthesis protein PurH"/>
    <property type="match status" value="1"/>
</dbReference>
<dbReference type="Gene3D" id="3.40.140.20">
    <property type="match status" value="2"/>
</dbReference>
<dbReference type="Gene3D" id="3.40.50.1380">
    <property type="entry name" value="Methylglyoxal synthase-like domain"/>
    <property type="match status" value="1"/>
</dbReference>
<dbReference type="HAMAP" id="MF_00139">
    <property type="entry name" value="PurH"/>
    <property type="match status" value="1"/>
</dbReference>
<dbReference type="InterPro" id="IPR024051">
    <property type="entry name" value="AICAR_Tfase_dup_dom_sf"/>
</dbReference>
<dbReference type="InterPro" id="IPR016193">
    <property type="entry name" value="Cytidine_deaminase-like"/>
</dbReference>
<dbReference type="InterPro" id="IPR011607">
    <property type="entry name" value="MGS-like_dom"/>
</dbReference>
<dbReference type="InterPro" id="IPR036914">
    <property type="entry name" value="MGS-like_dom_sf"/>
</dbReference>
<dbReference type="InterPro" id="IPR002695">
    <property type="entry name" value="PurH-like"/>
</dbReference>
<dbReference type="NCBIfam" id="NF002049">
    <property type="entry name" value="PRK00881.1"/>
    <property type="match status" value="1"/>
</dbReference>
<dbReference type="NCBIfam" id="TIGR00355">
    <property type="entry name" value="purH"/>
    <property type="match status" value="1"/>
</dbReference>
<dbReference type="PANTHER" id="PTHR11692:SF0">
    <property type="entry name" value="BIFUNCTIONAL PURINE BIOSYNTHESIS PROTEIN ATIC"/>
    <property type="match status" value="1"/>
</dbReference>
<dbReference type="PANTHER" id="PTHR11692">
    <property type="entry name" value="BIFUNCTIONAL PURINE BIOSYNTHESIS PROTEIN PURH"/>
    <property type="match status" value="1"/>
</dbReference>
<dbReference type="Pfam" id="PF01808">
    <property type="entry name" value="AICARFT_IMPCHas"/>
    <property type="match status" value="1"/>
</dbReference>
<dbReference type="Pfam" id="PF02142">
    <property type="entry name" value="MGS"/>
    <property type="match status" value="1"/>
</dbReference>
<dbReference type="PIRSF" id="PIRSF000414">
    <property type="entry name" value="AICARFT_IMPCHas"/>
    <property type="match status" value="1"/>
</dbReference>
<dbReference type="SMART" id="SM00798">
    <property type="entry name" value="AICARFT_IMPCHas"/>
    <property type="match status" value="1"/>
</dbReference>
<dbReference type="SMART" id="SM00851">
    <property type="entry name" value="MGS"/>
    <property type="match status" value="1"/>
</dbReference>
<dbReference type="SUPFAM" id="SSF53927">
    <property type="entry name" value="Cytidine deaminase-like"/>
    <property type="match status" value="1"/>
</dbReference>
<dbReference type="SUPFAM" id="SSF52335">
    <property type="entry name" value="Methylglyoxal synthase-like"/>
    <property type="match status" value="1"/>
</dbReference>
<dbReference type="PROSITE" id="PS51855">
    <property type="entry name" value="MGS"/>
    <property type="match status" value="1"/>
</dbReference>
<accession>B5BJS5</accession>
<keyword id="KW-0378">Hydrolase</keyword>
<keyword id="KW-0511">Multifunctional enzyme</keyword>
<keyword id="KW-0658">Purine biosynthesis</keyword>
<keyword id="KW-0808">Transferase</keyword>
<sequence length="529" mass="57453">MQQRRPVRRALLSVSDKAGIIEFAQALSARGVELLSTGGTARLLAEKGLPVTEVSDYTGFPEMMDGRVKTLHPKVHGGILGRRGQDDAIMEQHHIAPIDMVVVNLYPFAETVAREGCSLEDAVENIDIGGPTMVRSAAKNHKDVAIVVKSSDYDAIIKEMDANEGSLTLDTRFDLAIKAFEHTAAYDSMIANYFGSMVPAYHGESKEAAGRFPRTLNLNFIKKQDMRYGENSHQQAAFYIEENVKEASVATAQQVQGKALSYNNIADTDAALECVKEFNEPACVIVKHANPCGVAVSTTILDAYDRAYKTDPTSAFGGIIAFNRELDAETAQAIISRQFVEVIIAPSATEDALKITAAKQNVRVLTCGQWAQRVPGLDFKRVNGGLLVQDRDLGMVSEAELRVVSKRQPTEQELRDALFCWKVAKFVKSNAIVYAKENMTIGIGAGQMSRVYSAKIAGIKAADEGLEVKGSAMASDAFFPFRDGIDAAAAVGVSCVIQPGGSIRDDEVIAAADEHGIAMIFTDMRHFRH</sequence>
<name>PUR9_SALPK</name>
<reference key="1">
    <citation type="journal article" date="2009" name="BMC Genomics">
        <title>Pseudogene accumulation in the evolutionary histories of Salmonella enterica serovars Paratyphi A and Typhi.</title>
        <authorList>
            <person name="Holt K.E."/>
            <person name="Thomson N.R."/>
            <person name="Wain J."/>
            <person name="Langridge G.C."/>
            <person name="Hasan R."/>
            <person name="Bhutta Z.A."/>
            <person name="Quail M.A."/>
            <person name="Norbertczak H."/>
            <person name="Walker D."/>
            <person name="Simmonds M."/>
            <person name="White B."/>
            <person name="Bason N."/>
            <person name="Mungall K."/>
            <person name="Dougan G."/>
            <person name="Parkhill J."/>
        </authorList>
    </citation>
    <scope>NUCLEOTIDE SEQUENCE [LARGE SCALE GENOMIC DNA]</scope>
    <source>
        <strain>AKU_12601</strain>
    </source>
</reference>
<organism>
    <name type="scientific">Salmonella paratyphi A (strain AKU_12601)</name>
    <dbReference type="NCBI Taxonomy" id="554290"/>
    <lineage>
        <taxon>Bacteria</taxon>
        <taxon>Pseudomonadati</taxon>
        <taxon>Pseudomonadota</taxon>
        <taxon>Gammaproteobacteria</taxon>
        <taxon>Enterobacterales</taxon>
        <taxon>Enterobacteriaceae</taxon>
        <taxon>Salmonella</taxon>
    </lineage>
</organism>
<feature type="chain" id="PRO_1000096094" description="Bifunctional purine biosynthesis protein PurH">
    <location>
        <begin position="1"/>
        <end position="529"/>
    </location>
</feature>
<feature type="domain" description="MGS-like" evidence="2">
    <location>
        <begin position="1"/>
        <end position="148"/>
    </location>
</feature>
<gene>
    <name evidence="1" type="primary">purH</name>
    <name type="ordered locus">SSPA3728</name>
</gene>